<evidence type="ECO:0000255" key="1">
    <source>
        <dbReference type="HAMAP-Rule" id="MF_00082"/>
    </source>
</evidence>
<name>ARGB_SYNP6</name>
<accession>Q5MZ48</accession>
<keyword id="KW-0028">Amino-acid biosynthesis</keyword>
<keyword id="KW-0055">Arginine biosynthesis</keyword>
<keyword id="KW-0067">ATP-binding</keyword>
<keyword id="KW-0963">Cytoplasm</keyword>
<keyword id="KW-0418">Kinase</keyword>
<keyword id="KW-0547">Nucleotide-binding</keyword>
<keyword id="KW-0808">Transferase</keyword>
<sequence>MSSEFIEAGAADRVRILSEALPYLQQFAGRTVVVKYGGAAMKQEELKEAVMRDIVFLACVGMRPVVVHGGGPEINAWLGRVGIEPQFHNGLRVTDADTMEVVEMVLVGRVNKDIVSRINTTGGRAVGFCGTDGRLVLARPHDQEGIGFVGEVNSVNSEVIEPLLERGYIPVISSVAADENGQSFNINADTVAGEIAAALNAEKLILLTDTRGILEDPKRPESLIPRLNIPQSRELIAQGIVGGGMIPKVDCCIRSLAQGVRAAHIIDGRIPHALLLEIFTDAGIGTMIVGSGYHEAHQPWQ</sequence>
<feature type="chain" id="PRO_0000264769" description="Acetylglutamate kinase">
    <location>
        <begin position="1"/>
        <end position="301"/>
    </location>
</feature>
<feature type="binding site" evidence="1">
    <location>
        <begin position="70"/>
        <end position="71"/>
    </location>
    <ligand>
        <name>substrate</name>
    </ligand>
</feature>
<feature type="binding site" evidence="1">
    <location>
        <position position="92"/>
    </location>
    <ligand>
        <name>substrate</name>
    </ligand>
</feature>
<feature type="binding site" evidence="1">
    <location>
        <position position="185"/>
    </location>
    <ligand>
        <name>substrate</name>
    </ligand>
</feature>
<feature type="site" description="Transition state stabilizer" evidence="1">
    <location>
        <position position="35"/>
    </location>
</feature>
<feature type="site" description="Transition state stabilizer" evidence="1">
    <location>
        <position position="248"/>
    </location>
</feature>
<proteinExistence type="inferred from homology"/>
<dbReference type="EC" id="2.7.2.8" evidence="1"/>
<dbReference type="EMBL" id="AP008231">
    <property type="protein sequence ID" value="BAD80672.1"/>
    <property type="molecule type" value="Genomic_DNA"/>
</dbReference>
<dbReference type="RefSeq" id="WP_011244792.1">
    <property type="nucleotide sequence ID" value="NZ_CP085785.1"/>
</dbReference>
<dbReference type="SMR" id="Q5MZ48"/>
<dbReference type="GeneID" id="72430471"/>
<dbReference type="KEGG" id="syc:syc2482_c"/>
<dbReference type="eggNOG" id="COG0548">
    <property type="taxonomic scope" value="Bacteria"/>
</dbReference>
<dbReference type="UniPathway" id="UPA00068">
    <property type="reaction ID" value="UER00107"/>
</dbReference>
<dbReference type="Proteomes" id="UP000001175">
    <property type="component" value="Chromosome"/>
</dbReference>
<dbReference type="GO" id="GO:0005737">
    <property type="term" value="C:cytoplasm"/>
    <property type="evidence" value="ECO:0007669"/>
    <property type="project" value="UniProtKB-SubCell"/>
</dbReference>
<dbReference type="GO" id="GO:0003991">
    <property type="term" value="F:acetylglutamate kinase activity"/>
    <property type="evidence" value="ECO:0007669"/>
    <property type="project" value="UniProtKB-UniRule"/>
</dbReference>
<dbReference type="GO" id="GO:0005524">
    <property type="term" value="F:ATP binding"/>
    <property type="evidence" value="ECO:0007669"/>
    <property type="project" value="UniProtKB-UniRule"/>
</dbReference>
<dbReference type="GO" id="GO:0042450">
    <property type="term" value="P:arginine biosynthetic process via ornithine"/>
    <property type="evidence" value="ECO:0007669"/>
    <property type="project" value="UniProtKB-UniRule"/>
</dbReference>
<dbReference type="GO" id="GO:0006526">
    <property type="term" value="P:L-arginine biosynthetic process"/>
    <property type="evidence" value="ECO:0007669"/>
    <property type="project" value="UniProtKB-UniPathway"/>
</dbReference>
<dbReference type="CDD" id="cd04250">
    <property type="entry name" value="AAK_NAGK-C"/>
    <property type="match status" value="1"/>
</dbReference>
<dbReference type="FunFam" id="3.40.1160.10:FF:000004">
    <property type="entry name" value="Acetylglutamate kinase"/>
    <property type="match status" value="1"/>
</dbReference>
<dbReference type="Gene3D" id="3.40.1160.10">
    <property type="entry name" value="Acetylglutamate kinase-like"/>
    <property type="match status" value="1"/>
</dbReference>
<dbReference type="HAMAP" id="MF_00082">
    <property type="entry name" value="ArgB"/>
    <property type="match status" value="1"/>
</dbReference>
<dbReference type="InterPro" id="IPR036393">
    <property type="entry name" value="AceGlu_kinase-like_sf"/>
</dbReference>
<dbReference type="InterPro" id="IPR004662">
    <property type="entry name" value="AcgluKinase_fam"/>
</dbReference>
<dbReference type="InterPro" id="IPR037528">
    <property type="entry name" value="ArgB"/>
</dbReference>
<dbReference type="InterPro" id="IPR001048">
    <property type="entry name" value="Asp/Glu/Uridylate_kinase"/>
</dbReference>
<dbReference type="InterPro" id="IPR001057">
    <property type="entry name" value="Glu/AcGlu_kinase"/>
</dbReference>
<dbReference type="InterPro" id="IPR041727">
    <property type="entry name" value="NAGK-C"/>
</dbReference>
<dbReference type="NCBIfam" id="TIGR00761">
    <property type="entry name" value="argB"/>
    <property type="match status" value="1"/>
</dbReference>
<dbReference type="PANTHER" id="PTHR23342">
    <property type="entry name" value="N-ACETYLGLUTAMATE SYNTHASE"/>
    <property type="match status" value="1"/>
</dbReference>
<dbReference type="PANTHER" id="PTHR23342:SF0">
    <property type="entry name" value="N-ACETYLGLUTAMATE SYNTHASE, MITOCHONDRIAL"/>
    <property type="match status" value="1"/>
</dbReference>
<dbReference type="Pfam" id="PF00696">
    <property type="entry name" value="AA_kinase"/>
    <property type="match status" value="1"/>
</dbReference>
<dbReference type="PIRSF" id="PIRSF000728">
    <property type="entry name" value="NAGK"/>
    <property type="match status" value="1"/>
</dbReference>
<dbReference type="PRINTS" id="PR00474">
    <property type="entry name" value="GLU5KINASE"/>
</dbReference>
<dbReference type="SUPFAM" id="SSF53633">
    <property type="entry name" value="Carbamate kinase-like"/>
    <property type="match status" value="1"/>
</dbReference>
<comment type="function">
    <text evidence="1">Catalyzes the ATP-dependent phosphorylation of N-acetyl-L-glutamate.</text>
</comment>
<comment type="catalytic activity">
    <reaction evidence="1">
        <text>N-acetyl-L-glutamate + ATP = N-acetyl-L-glutamyl 5-phosphate + ADP</text>
        <dbReference type="Rhea" id="RHEA:14629"/>
        <dbReference type="ChEBI" id="CHEBI:30616"/>
        <dbReference type="ChEBI" id="CHEBI:44337"/>
        <dbReference type="ChEBI" id="CHEBI:57936"/>
        <dbReference type="ChEBI" id="CHEBI:456216"/>
        <dbReference type="EC" id="2.7.2.8"/>
    </reaction>
</comment>
<comment type="pathway">
    <text evidence="1">Amino-acid biosynthesis; L-arginine biosynthesis; N(2)-acetyl-L-ornithine from L-glutamate: step 2/4.</text>
</comment>
<comment type="subcellular location">
    <subcellularLocation>
        <location evidence="1">Cytoplasm</location>
    </subcellularLocation>
</comment>
<comment type="similarity">
    <text evidence="1">Belongs to the acetylglutamate kinase family. ArgB subfamily.</text>
</comment>
<reference key="1">
    <citation type="journal article" date="2007" name="Photosyn. Res.">
        <title>Complete nucleotide sequence of the freshwater unicellular cyanobacterium Synechococcus elongatus PCC 6301 chromosome: gene content and organization.</title>
        <authorList>
            <person name="Sugita C."/>
            <person name="Ogata K."/>
            <person name="Shikata M."/>
            <person name="Jikuya H."/>
            <person name="Takano J."/>
            <person name="Furumichi M."/>
            <person name="Kanehisa M."/>
            <person name="Omata T."/>
            <person name="Sugiura M."/>
            <person name="Sugita M."/>
        </authorList>
    </citation>
    <scope>NUCLEOTIDE SEQUENCE [LARGE SCALE GENOMIC DNA]</scope>
    <source>
        <strain>ATCC 27144 / PCC 6301 / SAUG 1402/1</strain>
    </source>
</reference>
<organism>
    <name type="scientific">Synechococcus sp. (strain ATCC 27144 / PCC 6301 / SAUG 1402/1)</name>
    <name type="common">Anacystis nidulans</name>
    <dbReference type="NCBI Taxonomy" id="269084"/>
    <lineage>
        <taxon>Bacteria</taxon>
        <taxon>Bacillati</taxon>
        <taxon>Cyanobacteriota</taxon>
        <taxon>Cyanophyceae</taxon>
        <taxon>Synechococcales</taxon>
        <taxon>Synechococcaceae</taxon>
        <taxon>Synechococcus</taxon>
    </lineage>
</organism>
<gene>
    <name evidence="1" type="primary">argB</name>
    <name type="ordered locus">syc2482_c</name>
</gene>
<protein>
    <recommendedName>
        <fullName evidence="1">Acetylglutamate kinase</fullName>
        <ecNumber evidence="1">2.7.2.8</ecNumber>
    </recommendedName>
    <alternativeName>
        <fullName evidence="1">N-acetyl-L-glutamate 5-phosphotransferase</fullName>
    </alternativeName>
    <alternativeName>
        <fullName evidence="1">NAG kinase</fullName>
        <shortName evidence="1">NAGK</shortName>
    </alternativeName>
</protein>